<gene>
    <name evidence="1" type="primary">guaA</name>
    <name type="ordered locus">Rmag_0914</name>
</gene>
<keyword id="KW-0067">ATP-binding</keyword>
<keyword id="KW-0315">Glutamine amidotransferase</keyword>
<keyword id="KW-0332">GMP biosynthesis</keyword>
<keyword id="KW-0436">Ligase</keyword>
<keyword id="KW-0547">Nucleotide-binding</keyword>
<keyword id="KW-0658">Purine biosynthesis</keyword>
<reference key="1">
    <citation type="journal article" date="2007" name="Science">
        <title>The Calyptogena magnifica chemoautotrophic symbiont genome.</title>
        <authorList>
            <person name="Newton I.L.G."/>
            <person name="Woyke T."/>
            <person name="Auchtung T.A."/>
            <person name="Dilly G.F."/>
            <person name="Dutton R.J."/>
            <person name="Fisher M.C."/>
            <person name="Fontanez K.M."/>
            <person name="Lau E."/>
            <person name="Stewart F.J."/>
            <person name="Richardson P.M."/>
            <person name="Barry K.W."/>
            <person name="Saunders E."/>
            <person name="Detter J.C."/>
            <person name="Wu D."/>
            <person name="Eisen J.A."/>
            <person name="Cavanaugh C.M."/>
        </authorList>
    </citation>
    <scope>NUCLEOTIDE SEQUENCE [LARGE SCALE GENOMIC DNA]</scope>
</reference>
<proteinExistence type="inferred from homology"/>
<dbReference type="EC" id="6.3.5.2" evidence="1"/>
<dbReference type="EMBL" id="CP000488">
    <property type="protein sequence ID" value="ABL02627.1"/>
    <property type="molecule type" value="Genomic_DNA"/>
</dbReference>
<dbReference type="SMR" id="A1AXH0"/>
<dbReference type="STRING" id="413404.Rmag_0914"/>
<dbReference type="KEGG" id="rma:Rmag_0914"/>
<dbReference type="eggNOG" id="COG0518">
    <property type="taxonomic scope" value="Bacteria"/>
</dbReference>
<dbReference type="eggNOG" id="COG0519">
    <property type="taxonomic scope" value="Bacteria"/>
</dbReference>
<dbReference type="HOGENOM" id="CLU_014340_0_5_6"/>
<dbReference type="UniPathway" id="UPA00189">
    <property type="reaction ID" value="UER00296"/>
</dbReference>
<dbReference type="Proteomes" id="UP000002587">
    <property type="component" value="Chromosome"/>
</dbReference>
<dbReference type="GO" id="GO:0005829">
    <property type="term" value="C:cytosol"/>
    <property type="evidence" value="ECO:0007669"/>
    <property type="project" value="TreeGrafter"/>
</dbReference>
<dbReference type="GO" id="GO:0005524">
    <property type="term" value="F:ATP binding"/>
    <property type="evidence" value="ECO:0007669"/>
    <property type="project" value="UniProtKB-UniRule"/>
</dbReference>
<dbReference type="GO" id="GO:0003921">
    <property type="term" value="F:GMP synthase activity"/>
    <property type="evidence" value="ECO:0007669"/>
    <property type="project" value="InterPro"/>
</dbReference>
<dbReference type="CDD" id="cd01742">
    <property type="entry name" value="GATase1_GMP_Synthase"/>
    <property type="match status" value="1"/>
</dbReference>
<dbReference type="CDD" id="cd01997">
    <property type="entry name" value="GMP_synthase_C"/>
    <property type="match status" value="1"/>
</dbReference>
<dbReference type="FunFam" id="3.30.300.10:FF:000002">
    <property type="entry name" value="GMP synthase [glutamine-hydrolyzing]"/>
    <property type="match status" value="1"/>
</dbReference>
<dbReference type="FunFam" id="3.40.50.620:FF:000001">
    <property type="entry name" value="GMP synthase [glutamine-hydrolyzing]"/>
    <property type="match status" value="1"/>
</dbReference>
<dbReference type="FunFam" id="3.40.50.880:FF:000001">
    <property type="entry name" value="GMP synthase [glutamine-hydrolyzing]"/>
    <property type="match status" value="1"/>
</dbReference>
<dbReference type="Gene3D" id="3.30.300.10">
    <property type="match status" value="1"/>
</dbReference>
<dbReference type="Gene3D" id="3.40.50.880">
    <property type="match status" value="1"/>
</dbReference>
<dbReference type="Gene3D" id="3.40.50.620">
    <property type="entry name" value="HUPs"/>
    <property type="match status" value="1"/>
</dbReference>
<dbReference type="HAMAP" id="MF_00344">
    <property type="entry name" value="GMP_synthase"/>
    <property type="match status" value="1"/>
</dbReference>
<dbReference type="InterPro" id="IPR029062">
    <property type="entry name" value="Class_I_gatase-like"/>
</dbReference>
<dbReference type="InterPro" id="IPR017926">
    <property type="entry name" value="GATASE"/>
</dbReference>
<dbReference type="InterPro" id="IPR001674">
    <property type="entry name" value="GMP_synth_C"/>
</dbReference>
<dbReference type="InterPro" id="IPR004739">
    <property type="entry name" value="GMP_synth_GATase"/>
</dbReference>
<dbReference type="InterPro" id="IPR022955">
    <property type="entry name" value="GMP_synthase"/>
</dbReference>
<dbReference type="InterPro" id="IPR025777">
    <property type="entry name" value="GMPS_ATP_PPase_dom"/>
</dbReference>
<dbReference type="InterPro" id="IPR022310">
    <property type="entry name" value="NAD/GMP_synthase"/>
</dbReference>
<dbReference type="InterPro" id="IPR014729">
    <property type="entry name" value="Rossmann-like_a/b/a_fold"/>
</dbReference>
<dbReference type="NCBIfam" id="TIGR00884">
    <property type="entry name" value="guaA_Cterm"/>
    <property type="match status" value="1"/>
</dbReference>
<dbReference type="NCBIfam" id="TIGR00888">
    <property type="entry name" value="guaA_Nterm"/>
    <property type="match status" value="1"/>
</dbReference>
<dbReference type="NCBIfam" id="NF000848">
    <property type="entry name" value="PRK00074.1"/>
    <property type="match status" value="1"/>
</dbReference>
<dbReference type="PANTHER" id="PTHR11922:SF2">
    <property type="entry name" value="GMP SYNTHASE [GLUTAMINE-HYDROLYZING]"/>
    <property type="match status" value="1"/>
</dbReference>
<dbReference type="PANTHER" id="PTHR11922">
    <property type="entry name" value="GMP SYNTHASE-RELATED"/>
    <property type="match status" value="1"/>
</dbReference>
<dbReference type="Pfam" id="PF00117">
    <property type="entry name" value="GATase"/>
    <property type="match status" value="1"/>
</dbReference>
<dbReference type="Pfam" id="PF00958">
    <property type="entry name" value="GMP_synt_C"/>
    <property type="match status" value="1"/>
</dbReference>
<dbReference type="Pfam" id="PF02540">
    <property type="entry name" value="NAD_synthase"/>
    <property type="match status" value="1"/>
</dbReference>
<dbReference type="PRINTS" id="PR00097">
    <property type="entry name" value="ANTSNTHASEII"/>
</dbReference>
<dbReference type="PRINTS" id="PR00099">
    <property type="entry name" value="CPSGATASE"/>
</dbReference>
<dbReference type="PRINTS" id="PR00096">
    <property type="entry name" value="GATASE"/>
</dbReference>
<dbReference type="SUPFAM" id="SSF52402">
    <property type="entry name" value="Adenine nucleotide alpha hydrolases-like"/>
    <property type="match status" value="1"/>
</dbReference>
<dbReference type="SUPFAM" id="SSF52317">
    <property type="entry name" value="Class I glutamine amidotransferase-like"/>
    <property type="match status" value="1"/>
</dbReference>
<dbReference type="SUPFAM" id="SSF54810">
    <property type="entry name" value="GMP synthetase C-terminal dimerisation domain"/>
    <property type="match status" value="1"/>
</dbReference>
<dbReference type="PROSITE" id="PS51273">
    <property type="entry name" value="GATASE_TYPE_1"/>
    <property type="match status" value="1"/>
</dbReference>
<dbReference type="PROSITE" id="PS51553">
    <property type="entry name" value="GMPS_ATP_PPASE"/>
    <property type="match status" value="1"/>
</dbReference>
<sequence length="521" mass="58655">MMNNIHLDKILILDFGSQYTQLIARRVREIGVYCELFPYDVDSEFIKKLNPKGIILSGGPDTVTLDNAAKAPSIIFDLNIPILGICYGMQTMAIQLGGRATSANKHEYGFAKVRVRNHSPLLSDISDEGHGLLDVWMSHGIEVEQLPNGFKLIASTDNCNIAGFANVEKHYYGLQFHPEVTHTKQGERILERFISGICQCEKNWTTDNIIAKLVQNLKDQIGNANILLGLSGGVDSLVVAVLLQQAVGKQLTCVFVDNGLLRFNEGNEVMQIFAQNMDMKVIRANAHKKFYDALLNENEPEAKRKIIGRAFIEVFEEEAKKLDNIQFLAQGTIYPDVIESADAKYGKAKLIKSHHNVGGLPNDLQFKLVEPLKELFKDEVRKISVKLSIPPHIIYRHPFPGPGLGVRILGQVKQEYANILRQADAIFMDELHKNNLYDTVNQAFAVFLPIKSVGITGDERRYDYVIALRAVETIDFMTARWARLPYDFLDLVSNRIMNEISRISRVVYDVSGKPPATIEWE</sequence>
<comment type="function">
    <text evidence="1">Catalyzes the synthesis of GMP from XMP.</text>
</comment>
<comment type="catalytic activity">
    <reaction evidence="1">
        <text>XMP + L-glutamine + ATP + H2O = GMP + L-glutamate + AMP + diphosphate + 2 H(+)</text>
        <dbReference type="Rhea" id="RHEA:11680"/>
        <dbReference type="ChEBI" id="CHEBI:15377"/>
        <dbReference type="ChEBI" id="CHEBI:15378"/>
        <dbReference type="ChEBI" id="CHEBI:29985"/>
        <dbReference type="ChEBI" id="CHEBI:30616"/>
        <dbReference type="ChEBI" id="CHEBI:33019"/>
        <dbReference type="ChEBI" id="CHEBI:57464"/>
        <dbReference type="ChEBI" id="CHEBI:58115"/>
        <dbReference type="ChEBI" id="CHEBI:58359"/>
        <dbReference type="ChEBI" id="CHEBI:456215"/>
        <dbReference type="EC" id="6.3.5.2"/>
    </reaction>
</comment>
<comment type="pathway">
    <text evidence="1">Purine metabolism; GMP biosynthesis; GMP from XMP (L-Gln route): step 1/1.</text>
</comment>
<comment type="subunit">
    <text evidence="1">Homodimer.</text>
</comment>
<protein>
    <recommendedName>
        <fullName evidence="1">GMP synthase [glutamine-hydrolyzing]</fullName>
        <ecNumber evidence="1">6.3.5.2</ecNumber>
    </recommendedName>
    <alternativeName>
        <fullName evidence="1">GMP synthetase</fullName>
    </alternativeName>
    <alternativeName>
        <fullName evidence="1">Glutamine amidotransferase</fullName>
    </alternativeName>
</protein>
<feature type="chain" id="PRO_1000205309" description="GMP synthase [glutamine-hydrolyzing]">
    <location>
        <begin position="1"/>
        <end position="521"/>
    </location>
</feature>
<feature type="domain" description="Glutamine amidotransferase type-1" evidence="1">
    <location>
        <begin position="9"/>
        <end position="203"/>
    </location>
</feature>
<feature type="domain" description="GMPS ATP-PPase" evidence="1">
    <location>
        <begin position="204"/>
        <end position="396"/>
    </location>
</feature>
<feature type="active site" description="Nucleophile" evidence="1">
    <location>
        <position position="86"/>
    </location>
</feature>
<feature type="active site" evidence="1">
    <location>
        <position position="177"/>
    </location>
</feature>
<feature type="active site" evidence="1">
    <location>
        <position position="179"/>
    </location>
</feature>
<feature type="binding site" evidence="1">
    <location>
        <begin position="231"/>
        <end position="237"/>
    </location>
    <ligand>
        <name>ATP</name>
        <dbReference type="ChEBI" id="CHEBI:30616"/>
    </ligand>
</feature>
<name>GUAA_RUTMC</name>
<evidence type="ECO:0000255" key="1">
    <source>
        <dbReference type="HAMAP-Rule" id="MF_00344"/>
    </source>
</evidence>
<accession>A1AXH0</accession>
<organism>
    <name type="scientific">Ruthia magnifica subsp. Calyptogena magnifica</name>
    <dbReference type="NCBI Taxonomy" id="413404"/>
    <lineage>
        <taxon>Bacteria</taxon>
        <taxon>Pseudomonadati</taxon>
        <taxon>Pseudomonadota</taxon>
        <taxon>Gammaproteobacteria</taxon>
        <taxon>Candidatus Pseudothioglobaceae</taxon>
        <taxon>Candidatus Ruthturnera</taxon>
    </lineage>
</organism>